<reference key="1">
    <citation type="journal article" date="2000" name="Science">
        <title>The genome sequence of Drosophila melanogaster.</title>
        <authorList>
            <person name="Adams M.D."/>
            <person name="Celniker S.E."/>
            <person name="Holt R.A."/>
            <person name="Evans C.A."/>
            <person name="Gocayne J.D."/>
            <person name="Amanatides P.G."/>
            <person name="Scherer S.E."/>
            <person name="Li P.W."/>
            <person name="Hoskins R.A."/>
            <person name="Galle R.F."/>
            <person name="George R.A."/>
            <person name="Lewis S.E."/>
            <person name="Richards S."/>
            <person name="Ashburner M."/>
            <person name="Henderson S.N."/>
            <person name="Sutton G.G."/>
            <person name="Wortman J.R."/>
            <person name="Yandell M.D."/>
            <person name="Zhang Q."/>
            <person name="Chen L.X."/>
            <person name="Brandon R.C."/>
            <person name="Rogers Y.-H.C."/>
            <person name="Blazej R.G."/>
            <person name="Champe M."/>
            <person name="Pfeiffer B.D."/>
            <person name="Wan K.H."/>
            <person name="Doyle C."/>
            <person name="Baxter E.G."/>
            <person name="Helt G."/>
            <person name="Nelson C.R."/>
            <person name="Miklos G.L.G."/>
            <person name="Abril J.F."/>
            <person name="Agbayani A."/>
            <person name="An H.-J."/>
            <person name="Andrews-Pfannkoch C."/>
            <person name="Baldwin D."/>
            <person name="Ballew R.M."/>
            <person name="Basu A."/>
            <person name="Baxendale J."/>
            <person name="Bayraktaroglu L."/>
            <person name="Beasley E.M."/>
            <person name="Beeson K.Y."/>
            <person name="Benos P.V."/>
            <person name="Berman B.P."/>
            <person name="Bhandari D."/>
            <person name="Bolshakov S."/>
            <person name="Borkova D."/>
            <person name="Botchan M.R."/>
            <person name="Bouck J."/>
            <person name="Brokstein P."/>
            <person name="Brottier P."/>
            <person name="Burtis K.C."/>
            <person name="Busam D.A."/>
            <person name="Butler H."/>
            <person name="Cadieu E."/>
            <person name="Center A."/>
            <person name="Chandra I."/>
            <person name="Cherry J.M."/>
            <person name="Cawley S."/>
            <person name="Dahlke C."/>
            <person name="Davenport L.B."/>
            <person name="Davies P."/>
            <person name="de Pablos B."/>
            <person name="Delcher A."/>
            <person name="Deng Z."/>
            <person name="Mays A.D."/>
            <person name="Dew I."/>
            <person name="Dietz S.M."/>
            <person name="Dodson K."/>
            <person name="Doup L.E."/>
            <person name="Downes M."/>
            <person name="Dugan-Rocha S."/>
            <person name="Dunkov B.C."/>
            <person name="Dunn P."/>
            <person name="Durbin K.J."/>
            <person name="Evangelista C.C."/>
            <person name="Ferraz C."/>
            <person name="Ferriera S."/>
            <person name="Fleischmann W."/>
            <person name="Fosler C."/>
            <person name="Gabrielian A.E."/>
            <person name="Garg N.S."/>
            <person name="Gelbart W.M."/>
            <person name="Glasser K."/>
            <person name="Glodek A."/>
            <person name="Gong F."/>
            <person name="Gorrell J.H."/>
            <person name="Gu Z."/>
            <person name="Guan P."/>
            <person name="Harris M."/>
            <person name="Harris N.L."/>
            <person name="Harvey D.A."/>
            <person name="Heiman T.J."/>
            <person name="Hernandez J.R."/>
            <person name="Houck J."/>
            <person name="Hostin D."/>
            <person name="Houston K.A."/>
            <person name="Howland T.J."/>
            <person name="Wei M.-H."/>
            <person name="Ibegwam C."/>
            <person name="Jalali M."/>
            <person name="Kalush F."/>
            <person name="Karpen G.H."/>
            <person name="Ke Z."/>
            <person name="Kennison J.A."/>
            <person name="Ketchum K.A."/>
            <person name="Kimmel B.E."/>
            <person name="Kodira C.D."/>
            <person name="Kraft C.L."/>
            <person name="Kravitz S."/>
            <person name="Kulp D."/>
            <person name="Lai Z."/>
            <person name="Lasko P."/>
            <person name="Lei Y."/>
            <person name="Levitsky A.A."/>
            <person name="Li J.H."/>
            <person name="Li Z."/>
            <person name="Liang Y."/>
            <person name="Lin X."/>
            <person name="Liu X."/>
            <person name="Mattei B."/>
            <person name="McIntosh T.C."/>
            <person name="McLeod M.P."/>
            <person name="McPherson D."/>
            <person name="Merkulov G."/>
            <person name="Milshina N.V."/>
            <person name="Mobarry C."/>
            <person name="Morris J."/>
            <person name="Moshrefi A."/>
            <person name="Mount S.M."/>
            <person name="Moy M."/>
            <person name="Murphy B."/>
            <person name="Murphy L."/>
            <person name="Muzny D.M."/>
            <person name="Nelson D.L."/>
            <person name="Nelson D.R."/>
            <person name="Nelson K.A."/>
            <person name="Nixon K."/>
            <person name="Nusskern D.R."/>
            <person name="Pacleb J.M."/>
            <person name="Palazzolo M."/>
            <person name="Pittman G.S."/>
            <person name="Pan S."/>
            <person name="Pollard J."/>
            <person name="Puri V."/>
            <person name="Reese M.G."/>
            <person name="Reinert K."/>
            <person name="Remington K."/>
            <person name="Saunders R.D.C."/>
            <person name="Scheeler F."/>
            <person name="Shen H."/>
            <person name="Shue B.C."/>
            <person name="Siden-Kiamos I."/>
            <person name="Simpson M."/>
            <person name="Skupski M.P."/>
            <person name="Smith T.J."/>
            <person name="Spier E."/>
            <person name="Spradling A.C."/>
            <person name="Stapleton M."/>
            <person name="Strong R."/>
            <person name="Sun E."/>
            <person name="Svirskas R."/>
            <person name="Tector C."/>
            <person name="Turner R."/>
            <person name="Venter E."/>
            <person name="Wang A.H."/>
            <person name="Wang X."/>
            <person name="Wang Z.-Y."/>
            <person name="Wassarman D.A."/>
            <person name="Weinstock G.M."/>
            <person name="Weissenbach J."/>
            <person name="Williams S.M."/>
            <person name="Woodage T."/>
            <person name="Worley K.C."/>
            <person name="Wu D."/>
            <person name="Yang S."/>
            <person name="Yao Q.A."/>
            <person name="Ye J."/>
            <person name="Yeh R.-F."/>
            <person name="Zaveri J.S."/>
            <person name="Zhan M."/>
            <person name="Zhang G."/>
            <person name="Zhao Q."/>
            <person name="Zheng L."/>
            <person name="Zheng X.H."/>
            <person name="Zhong F.N."/>
            <person name="Zhong W."/>
            <person name="Zhou X."/>
            <person name="Zhu S.C."/>
            <person name="Zhu X."/>
            <person name="Smith H.O."/>
            <person name="Gibbs R.A."/>
            <person name="Myers E.W."/>
            <person name="Rubin G.M."/>
            <person name="Venter J.C."/>
        </authorList>
    </citation>
    <scope>NUCLEOTIDE SEQUENCE [LARGE SCALE GENOMIC DNA]</scope>
    <source>
        <strain>Berkeley</strain>
    </source>
</reference>
<reference key="2">
    <citation type="journal article" date="2002" name="Genome Biol.">
        <title>Annotation of the Drosophila melanogaster euchromatic genome: a systematic review.</title>
        <authorList>
            <person name="Misra S."/>
            <person name="Crosby M.A."/>
            <person name="Mungall C.J."/>
            <person name="Matthews B.B."/>
            <person name="Campbell K.S."/>
            <person name="Hradecky P."/>
            <person name="Huang Y."/>
            <person name="Kaminker J.S."/>
            <person name="Millburn G.H."/>
            <person name="Prochnik S.E."/>
            <person name="Smith C.D."/>
            <person name="Tupy J.L."/>
            <person name="Whitfield E.J."/>
            <person name="Bayraktaroglu L."/>
            <person name="Berman B.P."/>
            <person name="Bettencourt B.R."/>
            <person name="Celniker S.E."/>
            <person name="de Grey A.D.N.J."/>
            <person name="Drysdale R.A."/>
            <person name="Harris N.L."/>
            <person name="Richter J."/>
            <person name="Russo S."/>
            <person name="Schroeder A.J."/>
            <person name="Shu S.Q."/>
            <person name="Stapleton M."/>
            <person name="Yamada C."/>
            <person name="Ashburner M."/>
            <person name="Gelbart W.M."/>
            <person name="Rubin G.M."/>
            <person name="Lewis S.E."/>
        </authorList>
    </citation>
    <scope>GENOME REANNOTATION</scope>
    <source>
        <strain>Berkeley</strain>
    </source>
</reference>
<reference key="3">
    <citation type="journal article" date="2002" name="Genome Biol.">
        <title>A Drosophila full-length cDNA resource.</title>
        <authorList>
            <person name="Stapleton M."/>
            <person name="Carlson J.W."/>
            <person name="Brokstein P."/>
            <person name="Yu C."/>
            <person name="Champe M."/>
            <person name="George R.A."/>
            <person name="Guarin H."/>
            <person name="Kronmiller B."/>
            <person name="Pacleb J.M."/>
            <person name="Park S."/>
            <person name="Wan K.H."/>
            <person name="Rubin G.M."/>
            <person name="Celniker S.E."/>
        </authorList>
    </citation>
    <scope>NUCLEOTIDE SEQUENCE [LARGE SCALE MRNA] (ISOFORMS 1 AND 2)</scope>
    <source>
        <strain>Berkeley</strain>
        <tissue>Embryo</tissue>
        <tissue>Ovary</tissue>
    </source>
</reference>
<reference key="4">
    <citation type="journal article" date="2001" name="Mol. Cell. Biol.">
        <title>Drosophila Mediator complex is broadly utilized by diverse gene-specific transcription factors at different types of core promoters.</title>
        <authorList>
            <person name="Park J.M."/>
            <person name="Gim B.S."/>
            <person name="Kim J.M."/>
            <person name="Yoon J.H."/>
            <person name="Kim H.-S."/>
            <person name="Kang J.-G."/>
            <person name="Kim Y.-J."/>
        </authorList>
    </citation>
    <scope>FUNCTION OF THE MEDIATOR COMPLEX</scope>
    <scope>IDENTIFICATION IN A COMPLEX WITH CDK8; MED4; MED6; MED14; MED17; MED18; MED20 AND MED21</scope>
</reference>
<reference key="5">
    <citation type="journal article" date="2006" name="Genes Dev.">
        <title>Coactivator cross-talk specifies transcriptional output.</title>
        <authorList>
            <person name="Marr M.T. II"/>
            <person name="Isogai Y."/>
            <person name="Wright K.J."/>
            <person name="Tjian R."/>
        </authorList>
    </citation>
    <scope>FUNCTION</scope>
</reference>
<proteinExistence type="evidence at protein level"/>
<dbReference type="EMBL" id="AE014297">
    <property type="protein sequence ID" value="AAF52111.1"/>
    <property type="molecule type" value="Genomic_DNA"/>
</dbReference>
<dbReference type="EMBL" id="AE014297">
    <property type="protein sequence ID" value="AAN13286.1"/>
    <property type="molecule type" value="Genomic_DNA"/>
</dbReference>
<dbReference type="EMBL" id="AY061423">
    <property type="protein sequence ID" value="AAL28971.1"/>
    <property type="molecule type" value="mRNA"/>
</dbReference>
<dbReference type="EMBL" id="BT001465">
    <property type="protein sequence ID" value="AAN71220.1"/>
    <property type="molecule type" value="mRNA"/>
</dbReference>
<dbReference type="RefSeq" id="NP_001246908.1">
    <molecule id="Q8IH24-1"/>
    <property type="nucleotide sequence ID" value="NM_001259979.2"/>
</dbReference>
<dbReference type="RefSeq" id="NP_649483.1">
    <molecule id="Q8IH24-1"/>
    <property type="nucleotide sequence ID" value="NM_141226.4"/>
</dbReference>
<dbReference type="RefSeq" id="NP_730861.1">
    <molecule id="Q8IH24-1"/>
    <property type="nucleotide sequence ID" value="NM_169013.3"/>
</dbReference>
<dbReference type="SMR" id="Q8IH24"/>
<dbReference type="BioGRID" id="65796">
    <property type="interactions" value="19"/>
</dbReference>
<dbReference type="ComplexPortal" id="CPX-2308">
    <property type="entry name" value="Core mediator complex"/>
</dbReference>
<dbReference type="FunCoup" id="Q8IH24">
    <property type="interactions" value="1945"/>
</dbReference>
<dbReference type="IntAct" id="Q8IH24">
    <property type="interactions" value="46"/>
</dbReference>
<dbReference type="STRING" id="7227.FBpp0078496"/>
<dbReference type="PaxDb" id="7227-FBpp0078496"/>
<dbReference type="DNASU" id="40577"/>
<dbReference type="EnsemblMetazoa" id="FBtr0078856">
    <molecule id="Q8IH24-1"/>
    <property type="protein sequence ID" value="FBpp0078496"/>
    <property type="gene ID" value="FBgn0037262"/>
</dbReference>
<dbReference type="EnsemblMetazoa" id="FBtr0078857">
    <molecule id="Q8IH24-1"/>
    <property type="protein sequence ID" value="FBpp0078497"/>
    <property type="gene ID" value="FBgn0037262"/>
</dbReference>
<dbReference type="EnsemblMetazoa" id="FBtr0305312">
    <molecule id="Q8IH24-1"/>
    <property type="protein sequence ID" value="FBpp0293855"/>
    <property type="gene ID" value="FBgn0037262"/>
</dbReference>
<dbReference type="GeneID" id="40577"/>
<dbReference type="KEGG" id="dme:Dmel_CG1057"/>
<dbReference type="AGR" id="FB:FBgn0037262"/>
<dbReference type="CTD" id="51003"/>
<dbReference type="FlyBase" id="FBgn0037262">
    <property type="gene designation" value="MED31"/>
</dbReference>
<dbReference type="VEuPathDB" id="VectorBase:FBgn0037262"/>
<dbReference type="eggNOG" id="KOG4086">
    <property type="taxonomic scope" value="Eukaryota"/>
</dbReference>
<dbReference type="GeneTree" id="ENSGT00390000015531"/>
<dbReference type="HOGENOM" id="CLU_071681_0_1_1"/>
<dbReference type="InParanoid" id="Q8IH24"/>
<dbReference type="OMA" id="AQFIDDQ"/>
<dbReference type="OrthoDB" id="10257739at2759"/>
<dbReference type="PhylomeDB" id="Q8IH24"/>
<dbReference type="Reactome" id="R-DME-9841922">
    <property type="pathway name" value="MLL4 and MLL3 complexes regulate expression of PPARG target genes in adipogenesis and hepatic steatosis"/>
</dbReference>
<dbReference type="SignaLink" id="Q8IH24"/>
<dbReference type="BioGRID-ORCS" id="40577">
    <property type="hits" value="0 hits in 1 CRISPR screen"/>
</dbReference>
<dbReference type="ChiTaRS" id="MED31">
    <property type="organism name" value="fly"/>
</dbReference>
<dbReference type="GenomeRNAi" id="40577"/>
<dbReference type="PRO" id="PR:Q8IH24"/>
<dbReference type="Proteomes" id="UP000000803">
    <property type="component" value="Chromosome 3R"/>
</dbReference>
<dbReference type="Bgee" id="FBgn0037262">
    <property type="expression patterns" value="Expressed in spermatocyte in testis and 220 other cell types or tissues"/>
</dbReference>
<dbReference type="ExpressionAtlas" id="Q8IH24">
    <property type="expression patterns" value="baseline and differential"/>
</dbReference>
<dbReference type="GO" id="GO:0070847">
    <property type="term" value="C:core mediator complex"/>
    <property type="evidence" value="ECO:0000318"/>
    <property type="project" value="GO_Central"/>
</dbReference>
<dbReference type="GO" id="GO:0016592">
    <property type="term" value="C:mediator complex"/>
    <property type="evidence" value="ECO:0000314"/>
    <property type="project" value="UniProtKB"/>
</dbReference>
<dbReference type="GO" id="GO:0005634">
    <property type="term" value="C:nucleus"/>
    <property type="evidence" value="ECO:0000314"/>
    <property type="project" value="FlyBase"/>
</dbReference>
<dbReference type="GO" id="GO:0003712">
    <property type="term" value="F:transcription coregulator activity"/>
    <property type="evidence" value="ECO:0007669"/>
    <property type="project" value="InterPro"/>
</dbReference>
<dbReference type="GO" id="GO:0008595">
    <property type="term" value="P:anterior/posterior axis specification, embryo"/>
    <property type="evidence" value="ECO:0000315"/>
    <property type="project" value="FlyBase"/>
</dbReference>
<dbReference type="GO" id="GO:0045893">
    <property type="term" value="P:positive regulation of DNA-templated transcription"/>
    <property type="evidence" value="ECO:0007669"/>
    <property type="project" value="GOC"/>
</dbReference>
<dbReference type="GO" id="GO:0006357">
    <property type="term" value="P:regulation of transcription by RNA polymerase II"/>
    <property type="evidence" value="ECO:0000314"/>
    <property type="project" value="UniProtKB"/>
</dbReference>
<dbReference type="FunFam" id="1.10.10.1340:FF:000001">
    <property type="entry name" value="Mediator of RNA polymerase II transcription subunit 31"/>
    <property type="match status" value="1"/>
</dbReference>
<dbReference type="Gene3D" id="1.10.10.1340">
    <property type="entry name" value="Mediator of RNA polymerase II, submodule Med31 (Soh1)"/>
    <property type="match status" value="1"/>
</dbReference>
<dbReference type="InterPro" id="IPR038089">
    <property type="entry name" value="Med31_sf"/>
</dbReference>
<dbReference type="InterPro" id="IPR008831">
    <property type="entry name" value="Mediator_Med31"/>
</dbReference>
<dbReference type="PANTHER" id="PTHR13186">
    <property type="entry name" value="MEDIATOR OF RNA POLYMERASE II TRANSCRIPTION SUBUNIT 31"/>
    <property type="match status" value="1"/>
</dbReference>
<dbReference type="Pfam" id="PF05669">
    <property type="entry name" value="Med31"/>
    <property type="match status" value="1"/>
</dbReference>
<name>MED31_DROME</name>
<evidence type="ECO:0000256" key="1">
    <source>
        <dbReference type="SAM" id="MobiDB-lite"/>
    </source>
</evidence>
<evidence type="ECO:0000269" key="2">
    <source>
    </source>
</evidence>
<evidence type="ECO:0000269" key="3">
    <source>
    </source>
</evidence>
<evidence type="ECO:0000303" key="4">
    <source>
    </source>
</evidence>
<evidence type="ECO:0000305" key="5"/>
<keyword id="KW-0010">Activator</keyword>
<keyword id="KW-0025">Alternative splicing</keyword>
<keyword id="KW-0539">Nucleus</keyword>
<keyword id="KW-1185">Reference proteome</keyword>
<keyword id="KW-0804">Transcription</keyword>
<keyword id="KW-0805">Transcription regulation</keyword>
<sequence length="204" mass="23531">MAKMYGKGKTAIESEELQKRRWQIELEFVQCLSNPNYLNFLAQRGFFKDQSFINYLKYLQYWKEPDYAKYLMYPMCLYFLDLLQYEHFRREIVNSQCCKFIDDQAILQWQHYTRKRIKLIENVTAAQQQQQQLQQQQQQANGMEAATGGESAAPTPNVNGSASTADSQQTSSALQPVQAQPGNPQQQQQINGVASGANIKLELN</sequence>
<gene>
    <name type="primary">MED31</name>
    <name type="synonym">Trap18</name>
    <name type="ORF">CG1057</name>
</gene>
<accession>Q8IH24</accession>
<accession>A4V2E4</accession>
<accession>Q9VN40</accession>
<comment type="function">
    <text evidence="2 3">Component of the Mediator complex, a coactivator involved in the regulated transcription of nearly all RNA polymerase II-dependent genes. Mediator functions as a bridge to convey information from gene-specific regulatory proteins to the basal RNA polymerase II transcription machinery. Mediator is recruited to promoters by direct interactions with regulatory proteins and serves as a scaffold for the assembly of a functional preinitiation complex with RNA polymerase II and the general transcription factors. Required for activated transcription of the MtnA gene.</text>
</comment>
<comment type="subunit">
    <text evidence="2">Component of the Mediator complex, which includes at least MED4, MED6, MED14, MED17, MED18, MED20, MED21, MED23, MED24, MED27, MED30 and MED31.</text>
</comment>
<comment type="subcellular location">
    <subcellularLocation>
        <location evidence="5">Nucleus</location>
    </subcellularLocation>
</comment>
<comment type="alternative products">
    <event type="alternative splicing"/>
    <isoform>
        <id>Q8IH24-1</id>
        <name>1</name>
        <sequence type="displayed"/>
    </isoform>
    <isoform>
        <id>Q8IH24-2</id>
        <name>2</name>
        <sequence type="described" ref="VSP_008708"/>
    </isoform>
</comment>
<comment type="similarity">
    <text evidence="5">Belongs to the Mediator complex subunit 31 family.</text>
</comment>
<protein>
    <recommendedName>
        <fullName>Mediator of RNA polymerase II transcription subunit 31</fullName>
    </recommendedName>
    <alternativeName>
        <fullName>Mediator complex subunit 31</fullName>
    </alternativeName>
    <alternativeName>
        <fullName>Protein SOH1</fullName>
    </alternativeName>
    <alternativeName>
        <fullName>dSOH1</fullName>
    </alternativeName>
</protein>
<organism>
    <name type="scientific">Drosophila melanogaster</name>
    <name type="common">Fruit fly</name>
    <dbReference type="NCBI Taxonomy" id="7227"/>
    <lineage>
        <taxon>Eukaryota</taxon>
        <taxon>Metazoa</taxon>
        <taxon>Ecdysozoa</taxon>
        <taxon>Arthropoda</taxon>
        <taxon>Hexapoda</taxon>
        <taxon>Insecta</taxon>
        <taxon>Pterygota</taxon>
        <taxon>Neoptera</taxon>
        <taxon>Endopterygota</taxon>
        <taxon>Diptera</taxon>
        <taxon>Brachycera</taxon>
        <taxon>Muscomorpha</taxon>
        <taxon>Ephydroidea</taxon>
        <taxon>Drosophilidae</taxon>
        <taxon>Drosophila</taxon>
        <taxon>Sophophora</taxon>
    </lineage>
</organism>
<feature type="chain" id="PRO_0000212530" description="Mediator of RNA polymerase II transcription subunit 31">
    <location>
        <begin position="1"/>
        <end position="204"/>
    </location>
</feature>
<feature type="region of interest" description="Disordered" evidence="1">
    <location>
        <begin position="134"/>
        <end position="204"/>
    </location>
</feature>
<feature type="compositionally biased region" description="Low complexity" evidence="1">
    <location>
        <begin position="161"/>
        <end position="194"/>
    </location>
</feature>
<feature type="splice variant" id="VSP_008708" description="In isoform 2." evidence="4">
    <location>
        <begin position="1"/>
        <end position="71"/>
    </location>
</feature>